<feature type="chain" id="PRO_0000434788" description="Structural protein ORF5a">
    <location>
        <begin position="1"/>
        <end position="51"/>
    </location>
</feature>
<feature type="transmembrane region" description="Helical" evidence="1">
    <location>
        <begin position="11"/>
        <end position="28"/>
    </location>
</feature>
<organism>
    <name type="scientific">Porcine reproductive and respiratory syndrome virus (strain VR-2332)</name>
    <name type="common">PRRSV</name>
    <dbReference type="NCBI Taxonomy" id="300559"/>
    <lineage>
        <taxon>Viruses</taxon>
        <taxon>Riboviria</taxon>
        <taxon>Orthornavirae</taxon>
        <taxon>Pisuviricota</taxon>
        <taxon>Pisoniviricetes</taxon>
        <taxon>Nidovirales</taxon>
        <taxon>Arnidovirineae</taxon>
        <taxon>Arteriviridae</taxon>
        <taxon>Variarterivirinae</taxon>
        <taxon>Betaarterivirus</taxon>
        <taxon>Ampobartevirus</taxon>
        <taxon>Betaarterivirus americense</taxon>
    </lineage>
</organism>
<sequence length="51" mass="5926">MFKYVGEMLDRGLLLAIAFFVVYRAVLFCCARQRQQRQQLPSTADLQLDAM</sequence>
<dbReference type="EMBL" id="U87392">
    <property type="status" value="NOT_ANNOTATED_CDS"/>
    <property type="molecule type" value="Genomic_RNA"/>
</dbReference>
<dbReference type="EMBL" id="AY150564">
    <property type="status" value="NOT_ANNOTATED_CDS"/>
    <property type="molecule type" value="Genomic_RNA"/>
</dbReference>
<dbReference type="SMR" id="P0DJZ5"/>
<dbReference type="Proteomes" id="UP000113205">
    <property type="component" value="Segment"/>
</dbReference>
<dbReference type="Proteomes" id="UP000164333">
    <property type="component" value="Genome"/>
</dbReference>
<dbReference type="GO" id="GO:0020002">
    <property type="term" value="C:host cell plasma membrane"/>
    <property type="evidence" value="ECO:0007669"/>
    <property type="project" value="UniProtKB-SubCell"/>
</dbReference>
<dbReference type="GO" id="GO:0016020">
    <property type="term" value="C:membrane"/>
    <property type="evidence" value="ECO:0007669"/>
    <property type="project" value="UniProtKB-KW"/>
</dbReference>
<dbReference type="GO" id="GO:0044423">
    <property type="term" value="C:virion component"/>
    <property type="evidence" value="ECO:0007669"/>
    <property type="project" value="UniProtKB-KW"/>
</dbReference>
<proteinExistence type="evidence at protein level"/>
<name>ORF5A_PRRSR</name>
<protein>
    <recommendedName>
        <fullName>Structural protein ORF5a</fullName>
    </recommendedName>
</protein>
<keyword id="KW-0024">Alternative initiation</keyword>
<keyword id="KW-1032">Host cell membrane</keyword>
<keyword id="KW-1043">Host membrane</keyword>
<keyword id="KW-0472">Membrane</keyword>
<keyword id="KW-0812">Transmembrane</keyword>
<keyword id="KW-1133">Transmembrane helix</keyword>
<keyword id="KW-0946">Virion</keyword>
<evidence type="ECO:0000255" key="1"/>
<evidence type="ECO:0000269" key="2">
    <source>
    </source>
</evidence>
<evidence type="ECO:0000269" key="3">
    <source>
    </source>
</evidence>
<evidence type="ECO:0000305" key="4"/>
<accession>P0DJZ5</accession>
<reference key="1">
    <citation type="journal article" date="1999" name="J. Virol.">
        <title>Porcine reproductive and respiratory syndrome virus comparison: divergent evolution on two continents.</title>
        <authorList>
            <person name="Nelsen C.J."/>
            <person name="Murtaugh M.P."/>
            <person name="Faaberg K.S."/>
        </authorList>
    </citation>
    <scope>NUCLEOTIDE SEQUENCE [GENOMIC RNA]</scope>
</reference>
<reference key="2">
    <citation type="submission" date="1999-04" db="EMBL/GenBank/DDBJ databases">
        <authorList>
            <person name="Murtaugh M.P."/>
            <person name="Faaberg K.S."/>
            <person name="Nelsen C.J."/>
        </authorList>
    </citation>
    <scope>SEQUENCE REVISION</scope>
</reference>
<reference key="3">
    <citation type="journal article" date="2003" name="J. Virol.">
        <title>Generation of an infectious clone of VR-2332, a highly virulent North American-type isolate of porcine reproductive and respiratory syndrome virus.</title>
        <authorList>
            <person name="Nielsen H.S."/>
            <person name="Liu G."/>
            <person name="Nielsen J."/>
            <person name="Oleksiewicz M.B."/>
            <person name="Botner A."/>
            <person name="Storgaard T."/>
            <person name="Faaberg K.S."/>
        </authorList>
    </citation>
    <scope>NUCLEOTIDE SEQUENCE [GENOMIC RNA]</scope>
    <source>
        <strain>Infectious clone VR-2332</strain>
    </source>
</reference>
<reference key="4">
    <citation type="journal article" date="2011" name="J. Gen. Virol.">
        <title>Discovery of a small arterivirus gene that overlaps the GP5 coding sequence and is important for virus production.</title>
        <authorList>
            <person name="Firth A.E."/>
            <person name="Zevenhoven-Dobbe J.C."/>
            <person name="Wills N.M."/>
            <person name="Go Y.Y."/>
            <person name="Balasuriya U.B."/>
            <person name="Atkins J.F."/>
            <person name="Snijder E.J."/>
            <person name="Posthuma C.C."/>
        </authorList>
    </citation>
    <scope>CHARACTERIZATION</scope>
</reference>
<reference key="5">
    <citation type="journal article" date="2011" name="J. Gen. Virol.">
        <title>Novel structural protein in porcine reproductive and respiratory syndrome virus encoded by an alternative ORF5 present in all arteriviruses.</title>
        <authorList>
            <person name="Johnson C.R."/>
            <person name="Griggs T.F."/>
            <person name="Gnanandarajah J."/>
            <person name="Murtaugh M.P."/>
        </authorList>
    </citation>
    <scope>SUBCELLULAR LOCATION</scope>
</reference>
<reference key="6">
    <citation type="journal article" date="2015" name="Virus Res.">
        <title>Cysteine residues of the porcine reproductive and respiratory syndrome virus ORF5a protein are not essential for virus viability.</title>
        <authorList>
            <person name="Sun L."/>
            <person name="Zhou Y."/>
            <person name="Liu R."/>
            <person name="Li Y."/>
            <person name="Gao F."/>
            <person name="Wang X."/>
            <person name="Fan H."/>
            <person name="Yuan S."/>
            <person name="Wei Z."/>
            <person name="Tong G."/>
        </authorList>
    </citation>
    <scope>FUNCTION</scope>
    <scope>INTERACTION WITH GP2B AND GP4</scope>
</reference>
<comment type="function">
    <text evidence="3">Minor virion component that plays an essential role in virus infectivity.</text>
</comment>
<comment type="subunit">
    <text evidence="3">Interacts with GP2b and GP4.</text>
</comment>
<comment type="subcellular location">
    <subcellularLocation>
        <location evidence="2">Virion</location>
    </subcellularLocation>
    <subcellularLocation>
        <location evidence="2">Host cell membrane</location>
    </subcellularLocation>
</comment>
<comment type="alternative products">
    <event type="alternative initiation"/>
    <isoform>
        <id>P0DJZ5-1</id>
        <name>ORF5a</name>
        <name>Protein ORF5a</name>
        <sequence type="displayed"/>
    </isoform>
    <isoform>
        <id>P0DJZ5-2</id>
        <name>GP5</name>
        <name>Glycoprotein 5</name>
        <sequence type="not described"/>
    </isoform>
</comment>
<comment type="similarity">
    <text evidence="4">Belongs to the arteriviridae ORF5a protein family.</text>
</comment>
<organismHost>
    <name type="scientific">Sus scrofa</name>
    <name type="common">Pig</name>
    <dbReference type="NCBI Taxonomy" id="9823"/>
</organismHost>